<organism>
    <name type="scientific">Salmonella arizonae (strain ATCC BAA-731 / CDC346-86 / RSK2980)</name>
    <dbReference type="NCBI Taxonomy" id="41514"/>
    <lineage>
        <taxon>Bacteria</taxon>
        <taxon>Pseudomonadati</taxon>
        <taxon>Pseudomonadota</taxon>
        <taxon>Gammaproteobacteria</taxon>
        <taxon>Enterobacterales</taxon>
        <taxon>Enterobacteriaceae</taxon>
        <taxon>Salmonella</taxon>
    </lineage>
</organism>
<sequence>MSTLRLLISDSYDPWFNLAVEESIFRQMPATQRVLFLWRNADTVVIGRAQNPWKECNTRRMEKDNVRLARRSSGGGAVFHDLGNTCFTFMAGKPEYDKTISTNIVLAALNSLGVMADASGRNDLVVKTAEGDRKVSGSAYRETKDRGFHHGTLLLNADLSRLANYLNPDKKKLAAKGITSVRSRVANLTELLPGLSHEQVCQAVAEAFFAHYGERVEAEVISPDKTPDLPNFAETFALQSSWEWNFGQAPAFSHLLDERFTWGGVELHFDVEKGYITRTQVFTDSLNPAPQEALAERLQGCQYRAEILQQACDALRVDFPEQEKELQELSAWIAGAVR</sequence>
<accession>A9MRA3</accession>
<gene>
    <name evidence="1" type="primary">lplA</name>
    <name type="ordered locus">SARI_03007</name>
</gene>
<reference key="1">
    <citation type="submission" date="2007-11" db="EMBL/GenBank/DDBJ databases">
        <authorList>
            <consortium name="The Salmonella enterica serovar Arizonae Genome Sequencing Project"/>
            <person name="McClelland M."/>
            <person name="Sanderson E.K."/>
            <person name="Porwollik S."/>
            <person name="Spieth J."/>
            <person name="Clifton W.S."/>
            <person name="Fulton R."/>
            <person name="Chunyan W."/>
            <person name="Wollam A."/>
            <person name="Shah N."/>
            <person name="Pepin K."/>
            <person name="Bhonagiri V."/>
            <person name="Nash W."/>
            <person name="Johnson M."/>
            <person name="Thiruvilangam P."/>
            <person name="Wilson R."/>
        </authorList>
    </citation>
    <scope>NUCLEOTIDE SEQUENCE [LARGE SCALE GENOMIC DNA]</scope>
    <source>
        <strain>ATCC BAA-731 / CDC346-86 / RSK2980</strain>
    </source>
</reference>
<protein>
    <recommendedName>
        <fullName evidence="1">Lipoate-protein ligase A</fullName>
        <ecNumber evidence="1">6.3.1.20</ecNumber>
    </recommendedName>
    <alternativeName>
        <fullName evidence="1">Lipoate--protein ligase</fullName>
    </alternativeName>
</protein>
<dbReference type="EC" id="6.3.1.20" evidence="1"/>
<dbReference type="EMBL" id="CP000880">
    <property type="protein sequence ID" value="ABX22851.1"/>
    <property type="molecule type" value="Genomic_DNA"/>
</dbReference>
<dbReference type="SMR" id="A9MRA3"/>
<dbReference type="STRING" id="41514.SARI_03007"/>
<dbReference type="KEGG" id="ses:SARI_03007"/>
<dbReference type="HOGENOM" id="CLU_022986_0_1_6"/>
<dbReference type="UniPathway" id="UPA00537">
    <property type="reaction ID" value="UER00594"/>
</dbReference>
<dbReference type="UniPathway" id="UPA00537">
    <property type="reaction ID" value="UER00595"/>
</dbReference>
<dbReference type="Proteomes" id="UP000002084">
    <property type="component" value="Chromosome"/>
</dbReference>
<dbReference type="GO" id="GO:0005829">
    <property type="term" value="C:cytosol"/>
    <property type="evidence" value="ECO:0007669"/>
    <property type="project" value="TreeGrafter"/>
</dbReference>
<dbReference type="GO" id="GO:0005524">
    <property type="term" value="F:ATP binding"/>
    <property type="evidence" value="ECO:0007669"/>
    <property type="project" value="UniProtKB-KW"/>
</dbReference>
<dbReference type="GO" id="GO:0016979">
    <property type="term" value="F:lipoate-protein ligase activity"/>
    <property type="evidence" value="ECO:0007669"/>
    <property type="project" value="UniProtKB-UniRule"/>
</dbReference>
<dbReference type="GO" id="GO:0017118">
    <property type="term" value="F:lipoyltransferase activity"/>
    <property type="evidence" value="ECO:0007669"/>
    <property type="project" value="TreeGrafter"/>
</dbReference>
<dbReference type="GO" id="GO:0036211">
    <property type="term" value="P:protein modification process"/>
    <property type="evidence" value="ECO:0007669"/>
    <property type="project" value="InterPro"/>
</dbReference>
<dbReference type="CDD" id="cd16443">
    <property type="entry name" value="LplA"/>
    <property type="match status" value="1"/>
</dbReference>
<dbReference type="FunFam" id="3.30.390.50:FF:000002">
    <property type="entry name" value="Lipoate-protein ligase A"/>
    <property type="match status" value="1"/>
</dbReference>
<dbReference type="FunFam" id="3.30.930.10:FF:000024">
    <property type="entry name" value="Lipoate-protein ligase A"/>
    <property type="match status" value="1"/>
</dbReference>
<dbReference type="Gene3D" id="3.30.930.10">
    <property type="entry name" value="Bira Bifunctional Protein, Domain 2"/>
    <property type="match status" value="1"/>
</dbReference>
<dbReference type="Gene3D" id="3.30.390.50">
    <property type="entry name" value="CO dehydrogenase flavoprotein, C-terminal domain"/>
    <property type="match status" value="1"/>
</dbReference>
<dbReference type="HAMAP" id="MF_01602">
    <property type="entry name" value="LplA"/>
    <property type="match status" value="1"/>
</dbReference>
<dbReference type="InterPro" id="IPR045864">
    <property type="entry name" value="aa-tRNA-synth_II/BPL/LPL"/>
</dbReference>
<dbReference type="InterPro" id="IPR004143">
    <property type="entry name" value="BPL_LPL_catalytic"/>
</dbReference>
<dbReference type="InterPro" id="IPR023741">
    <property type="entry name" value="Lipoate_ligase_A"/>
</dbReference>
<dbReference type="InterPro" id="IPR019491">
    <property type="entry name" value="Lipoate_protein_ligase_C"/>
</dbReference>
<dbReference type="InterPro" id="IPR004562">
    <property type="entry name" value="LipoylTrfase_LipoateP_Ligase"/>
</dbReference>
<dbReference type="NCBIfam" id="TIGR00545">
    <property type="entry name" value="lipoyltrans"/>
    <property type="match status" value="1"/>
</dbReference>
<dbReference type="PANTHER" id="PTHR12561">
    <property type="entry name" value="LIPOATE-PROTEIN LIGASE"/>
    <property type="match status" value="1"/>
</dbReference>
<dbReference type="PANTHER" id="PTHR12561:SF3">
    <property type="entry name" value="LIPOYLTRANSFERASE 1, MITOCHONDRIAL"/>
    <property type="match status" value="1"/>
</dbReference>
<dbReference type="Pfam" id="PF10437">
    <property type="entry name" value="Lip_prot_lig_C"/>
    <property type="match status" value="1"/>
</dbReference>
<dbReference type="Pfam" id="PF21948">
    <property type="entry name" value="LplA-B_cat"/>
    <property type="match status" value="1"/>
</dbReference>
<dbReference type="SUPFAM" id="SSF55681">
    <property type="entry name" value="Class II aaRS and biotin synthetases"/>
    <property type="match status" value="1"/>
</dbReference>
<dbReference type="SUPFAM" id="SSF82649">
    <property type="entry name" value="SufE/NifU"/>
    <property type="match status" value="1"/>
</dbReference>
<dbReference type="PROSITE" id="PS51733">
    <property type="entry name" value="BPL_LPL_CATALYTIC"/>
    <property type="match status" value="1"/>
</dbReference>
<feature type="chain" id="PRO_1000088016" description="Lipoate-protein ligase A">
    <location>
        <begin position="1"/>
        <end position="338"/>
    </location>
</feature>
<feature type="domain" description="BPL/LPL catalytic" evidence="2">
    <location>
        <begin position="29"/>
        <end position="216"/>
    </location>
</feature>
<feature type="binding site" evidence="1">
    <location>
        <position position="71"/>
    </location>
    <ligand>
        <name>ATP</name>
        <dbReference type="ChEBI" id="CHEBI:30616"/>
    </ligand>
</feature>
<feature type="binding site" evidence="1">
    <location>
        <begin position="76"/>
        <end position="79"/>
    </location>
    <ligand>
        <name>ATP</name>
        <dbReference type="ChEBI" id="CHEBI:30616"/>
    </ligand>
</feature>
<feature type="binding site" evidence="1">
    <location>
        <position position="134"/>
    </location>
    <ligand>
        <name>(R)-lipoate</name>
        <dbReference type="ChEBI" id="CHEBI:83088"/>
    </ligand>
</feature>
<feature type="binding site" evidence="1">
    <location>
        <position position="134"/>
    </location>
    <ligand>
        <name>ATP</name>
        <dbReference type="ChEBI" id="CHEBI:30616"/>
    </ligand>
</feature>
<name>LPLA_SALAR</name>
<keyword id="KW-0067">ATP-binding</keyword>
<keyword id="KW-0963">Cytoplasm</keyword>
<keyword id="KW-0436">Ligase</keyword>
<keyword id="KW-0547">Nucleotide-binding</keyword>
<keyword id="KW-1185">Reference proteome</keyword>
<proteinExistence type="inferred from homology"/>
<comment type="function">
    <text evidence="1">Catalyzes both the ATP-dependent activation of exogenously supplied lipoate to lipoyl-AMP and the transfer of the activated lipoyl onto the lipoyl domains of lipoate-dependent enzymes.</text>
</comment>
<comment type="catalytic activity">
    <reaction evidence="1">
        <text>L-lysyl-[lipoyl-carrier protein] + (R)-lipoate + ATP = N(6)-[(R)-lipoyl]-L-lysyl-[lipoyl-carrier protein] + AMP + diphosphate + H(+)</text>
        <dbReference type="Rhea" id="RHEA:49288"/>
        <dbReference type="Rhea" id="RHEA-COMP:10500"/>
        <dbReference type="Rhea" id="RHEA-COMP:10502"/>
        <dbReference type="ChEBI" id="CHEBI:15378"/>
        <dbReference type="ChEBI" id="CHEBI:29969"/>
        <dbReference type="ChEBI" id="CHEBI:30616"/>
        <dbReference type="ChEBI" id="CHEBI:33019"/>
        <dbReference type="ChEBI" id="CHEBI:83088"/>
        <dbReference type="ChEBI" id="CHEBI:83099"/>
        <dbReference type="ChEBI" id="CHEBI:456215"/>
        <dbReference type="EC" id="6.3.1.20"/>
    </reaction>
</comment>
<comment type="pathway">
    <text evidence="1">Protein modification; protein lipoylation via exogenous pathway; protein N(6)-(lipoyl)lysine from lipoate: step 1/2.</text>
</comment>
<comment type="pathway">
    <text evidence="1">Protein modification; protein lipoylation via exogenous pathway; protein N(6)-(lipoyl)lysine from lipoate: step 2/2.</text>
</comment>
<comment type="subunit">
    <text evidence="1">Monomer.</text>
</comment>
<comment type="subcellular location">
    <subcellularLocation>
        <location evidence="1">Cytoplasm</location>
    </subcellularLocation>
</comment>
<comment type="miscellaneous">
    <text evidence="1">In the transfer reaction, the free carboxyl group of lipoic acid is attached via an amide linkage to the epsilon-amino group of a specific lysine residue of lipoyl domains of lipoate-dependent enzymes.</text>
</comment>
<comment type="similarity">
    <text evidence="1">Belongs to the LplA family.</text>
</comment>
<evidence type="ECO:0000255" key="1">
    <source>
        <dbReference type="HAMAP-Rule" id="MF_01602"/>
    </source>
</evidence>
<evidence type="ECO:0000255" key="2">
    <source>
        <dbReference type="PROSITE-ProRule" id="PRU01067"/>
    </source>
</evidence>